<protein>
    <recommendedName>
        <fullName evidence="1">S-adenosylmethionine:tRNA ribosyltransferase-isomerase</fullName>
        <ecNumber evidence="1">2.4.99.17</ecNumber>
    </recommendedName>
    <alternativeName>
        <fullName evidence="1">Queuosine biosynthesis protein QueA</fullName>
    </alternativeName>
</protein>
<evidence type="ECO:0000255" key="1">
    <source>
        <dbReference type="HAMAP-Rule" id="MF_00113"/>
    </source>
</evidence>
<name>QUEA_NITV4</name>
<keyword id="KW-0963">Cytoplasm</keyword>
<keyword id="KW-0671">Queuosine biosynthesis</keyword>
<keyword id="KW-0949">S-adenosyl-L-methionine</keyword>
<keyword id="KW-0808">Transferase</keyword>
<proteinExistence type="inferred from homology"/>
<feature type="chain" id="PRO_1000015207" description="S-adenosylmethionine:tRNA ribosyltransferase-isomerase">
    <location>
        <begin position="1"/>
        <end position="371"/>
    </location>
</feature>
<dbReference type="EC" id="2.4.99.17" evidence="1"/>
<dbReference type="EMBL" id="CP000527">
    <property type="protein sequence ID" value="ABM27067.1"/>
    <property type="molecule type" value="Genomic_DNA"/>
</dbReference>
<dbReference type="RefSeq" id="WP_011791345.1">
    <property type="nucleotide sequence ID" value="NC_008751.1"/>
</dbReference>
<dbReference type="SMR" id="A1V9F1"/>
<dbReference type="KEGG" id="dvl:Dvul_0043"/>
<dbReference type="HOGENOM" id="CLU_039110_1_0_7"/>
<dbReference type="UniPathway" id="UPA00392"/>
<dbReference type="Proteomes" id="UP000009173">
    <property type="component" value="Chromosome"/>
</dbReference>
<dbReference type="GO" id="GO:0005737">
    <property type="term" value="C:cytoplasm"/>
    <property type="evidence" value="ECO:0007669"/>
    <property type="project" value="UniProtKB-SubCell"/>
</dbReference>
<dbReference type="GO" id="GO:0051075">
    <property type="term" value="F:S-adenosylmethionine:tRNA ribosyltransferase-isomerase activity"/>
    <property type="evidence" value="ECO:0007669"/>
    <property type="project" value="UniProtKB-EC"/>
</dbReference>
<dbReference type="GO" id="GO:0008616">
    <property type="term" value="P:queuosine biosynthetic process"/>
    <property type="evidence" value="ECO:0007669"/>
    <property type="project" value="UniProtKB-UniRule"/>
</dbReference>
<dbReference type="GO" id="GO:0002099">
    <property type="term" value="P:tRNA wobble guanine modification"/>
    <property type="evidence" value="ECO:0007669"/>
    <property type="project" value="TreeGrafter"/>
</dbReference>
<dbReference type="FunFam" id="3.40.1780.10:FF:000001">
    <property type="entry name" value="S-adenosylmethionine:tRNA ribosyltransferase-isomerase"/>
    <property type="match status" value="1"/>
</dbReference>
<dbReference type="Gene3D" id="2.40.10.240">
    <property type="entry name" value="QueA-like"/>
    <property type="match status" value="1"/>
</dbReference>
<dbReference type="Gene3D" id="3.40.1780.10">
    <property type="entry name" value="QueA-like"/>
    <property type="match status" value="1"/>
</dbReference>
<dbReference type="HAMAP" id="MF_00113">
    <property type="entry name" value="QueA"/>
    <property type="match status" value="1"/>
</dbReference>
<dbReference type="InterPro" id="IPR003699">
    <property type="entry name" value="QueA"/>
</dbReference>
<dbReference type="InterPro" id="IPR042118">
    <property type="entry name" value="QueA_dom1"/>
</dbReference>
<dbReference type="InterPro" id="IPR042119">
    <property type="entry name" value="QueA_dom2"/>
</dbReference>
<dbReference type="InterPro" id="IPR036100">
    <property type="entry name" value="QueA_sf"/>
</dbReference>
<dbReference type="NCBIfam" id="NF001140">
    <property type="entry name" value="PRK00147.1"/>
    <property type="match status" value="1"/>
</dbReference>
<dbReference type="NCBIfam" id="TIGR00113">
    <property type="entry name" value="queA"/>
    <property type="match status" value="1"/>
</dbReference>
<dbReference type="PANTHER" id="PTHR30307">
    <property type="entry name" value="S-ADENOSYLMETHIONINE:TRNA RIBOSYLTRANSFERASE-ISOMERASE"/>
    <property type="match status" value="1"/>
</dbReference>
<dbReference type="PANTHER" id="PTHR30307:SF0">
    <property type="entry name" value="S-ADENOSYLMETHIONINE:TRNA RIBOSYLTRANSFERASE-ISOMERASE"/>
    <property type="match status" value="1"/>
</dbReference>
<dbReference type="Pfam" id="PF02547">
    <property type="entry name" value="Queuosine_synth"/>
    <property type="match status" value="1"/>
</dbReference>
<dbReference type="SUPFAM" id="SSF111337">
    <property type="entry name" value="QueA-like"/>
    <property type="match status" value="1"/>
</dbReference>
<organism>
    <name type="scientific">Nitratidesulfovibrio vulgaris (strain DP4)</name>
    <name type="common">Desulfovibrio vulgaris</name>
    <dbReference type="NCBI Taxonomy" id="391774"/>
    <lineage>
        <taxon>Bacteria</taxon>
        <taxon>Pseudomonadati</taxon>
        <taxon>Thermodesulfobacteriota</taxon>
        <taxon>Desulfovibrionia</taxon>
        <taxon>Desulfovibrionales</taxon>
        <taxon>Desulfovibrionaceae</taxon>
        <taxon>Nitratidesulfovibrio</taxon>
    </lineage>
</organism>
<gene>
    <name evidence="1" type="primary">queA</name>
    <name type="ordered locus">Dvul_0043</name>
</gene>
<sequence length="371" mass="41042">MKDDATGADFLLSGYDYELPEDRIAQHPPVERGLSRLLVLDRTTGERIHARFADLAEHLPEGALLVANNSKVLPARLLGHRPTGGKVEFLLLTPLPLVTPLAAGPASGTVEPGWCVAEVEGLLRASKPLRPGDTLSFGDDLRVEVVHKGEFGRSMVLLFWRGELATLFAREGHLPLPPYIRRADGDEDRDRYQTVFAREDRLGSVAAPTAGLHFTPSLRETLTARGHQWAEVTLYVGYGTFSPVRCADIRDHAMHREYVEVTAETVEAIRRAKADGRPVVAVGTTSCRVLEGVATAKGTLEPYAGWTDIFMYPGYTFKVVDHLITNFHLPESSLLMLVSAFAGRERVLATYREAIEEGYRFFSYGDAMLLR</sequence>
<accession>A1V9F1</accession>
<reference key="1">
    <citation type="journal article" date="2009" name="Environ. Microbiol.">
        <title>Contribution of mobile genetic elements to Desulfovibrio vulgaris genome plasticity.</title>
        <authorList>
            <person name="Walker C.B."/>
            <person name="Stolyar S."/>
            <person name="Chivian D."/>
            <person name="Pinel N."/>
            <person name="Gabster J.A."/>
            <person name="Dehal P.S."/>
            <person name="He Z."/>
            <person name="Yang Z.K."/>
            <person name="Yen H.C."/>
            <person name="Zhou J."/>
            <person name="Wall J.D."/>
            <person name="Hazen T.C."/>
            <person name="Arkin A.P."/>
            <person name="Stahl D.A."/>
        </authorList>
    </citation>
    <scope>NUCLEOTIDE SEQUENCE [LARGE SCALE GENOMIC DNA]</scope>
    <source>
        <strain>DP4</strain>
    </source>
</reference>
<comment type="function">
    <text evidence="1">Transfers and isomerizes the ribose moiety from AdoMet to the 7-aminomethyl group of 7-deazaguanine (preQ1-tRNA) to give epoxyqueuosine (oQ-tRNA).</text>
</comment>
<comment type="catalytic activity">
    <reaction evidence="1">
        <text>7-aminomethyl-7-carbaguanosine(34) in tRNA + S-adenosyl-L-methionine = epoxyqueuosine(34) in tRNA + adenine + L-methionine + 2 H(+)</text>
        <dbReference type="Rhea" id="RHEA:32155"/>
        <dbReference type="Rhea" id="RHEA-COMP:10342"/>
        <dbReference type="Rhea" id="RHEA-COMP:18582"/>
        <dbReference type="ChEBI" id="CHEBI:15378"/>
        <dbReference type="ChEBI" id="CHEBI:16708"/>
        <dbReference type="ChEBI" id="CHEBI:57844"/>
        <dbReference type="ChEBI" id="CHEBI:59789"/>
        <dbReference type="ChEBI" id="CHEBI:82833"/>
        <dbReference type="ChEBI" id="CHEBI:194443"/>
        <dbReference type="EC" id="2.4.99.17"/>
    </reaction>
</comment>
<comment type="pathway">
    <text evidence="1">tRNA modification; tRNA-queuosine biosynthesis.</text>
</comment>
<comment type="subunit">
    <text evidence="1">Monomer.</text>
</comment>
<comment type="subcellular location">
    <subcellularLocation>
        <location evidence="1">Cytoplasm</location>
    </subcellularLocation>
</comment>
<comment type="similarity">
    <text evidence="1">Belongs to the QueA family.</text>
</comment>